<organism>
    <name type="scientific">Human herpesvirus 1 (strain F)</name>
    <name type="common">HHV-1</name>
    <name type="synonym">Human herpes simplex virus 1</name>
    <dbReference type="NCBI Taxonomy" id="10304"/>
    <lineage>
        <taxon>Viruses</taxon>
        <taxon>Duplodnaviria</taxon>
        <taxon>Heunggongvirae</taxon>
        <taxon>Peploviricota</taxon>
        <taxon>Herviviricetes</taxon>
        <taxon>Herpesvirales</taxon>
        <taxon>Orthoherpesviridae</taxon>
        <taxon>Alphaherpesvirinae</taxon>
        <taxon>Simplexvirus</taxon>
        <taxon>Simplexvirus humanalpha1</taxon>
        <taxon>Human herpesvirus 1</taxon>
    </lineage>
</organism>
<proteinExistence type="evidence at protein level"/>
<organismHost>
    <name type="scientific">Homo sapiens</name>
    <name type="common">Human</name>
    <dbReference type="NCBI Taxonomy" id="9606"/>
</organismHost>
<keyword id="KW-1035">Host cytoplasm</keyword>
<keyword id="KW-1048">Host nucleus</keyword>
<keyword id="KW-0945">Host-virus interaction</keyword>
<keyword id="KW-1083">Inhibition of host autophagy by virus</keyword>
<keyword id="KW-1090">Inhibition of host innate immune response by virus</keyword>
<keyword id="KW-1114">Inhibition of host interferon signaling pathway by virus</keyword>
<keyword id="KW-1113">Inhibition of host RLR pathway by virus</keyword>
<keyword id="KW-0922">Interferon antiviral system evasion</keyword>
<keyword id="KW-1126">Modulation of host PP1 activity by virus</keyword>
<keyword id="KW-0677">Repeat</keyword>
<keyword id="KW-0899">Viral immunoevasion</keyword>
<keyword id="KW-0946">Virion</keyword>
<keyword id="KW-0843">Virulence</keyword>
<evidence type="ECO:0000250" key="1"/>
<evidence type="ECO:0000250" key="2">
    <source>
        <dbReference type="UniProtKB" id="P36313"/>
    </source>
</evidence>
<evidence type="ECO:0000256" key="3">
    <source>
        <dbReference type="SAM" id="MobiDB-lite"/>
    </source>
</evidence>
<evidence type="ECO:0000269" key="4">
    <source>
    </source>
</evidence>
<evidence type="ECO:0000269" key="5">
    <source>
    </source>
</evidence>
<evidence type="ECO:0000269" key="6">
    <source>
    </source>
</evidence>
<evidence type="ECO:0000269" key="7">
    <source>
    </source>
</evidence>
<evidence type="ECO:0000269" key="8">
    <source>
    </source>
</evidence>
<evidence type="ECO:0000269" key="9">
    <source>
    </source>
</evidence>
<evidence type="ECO:0000269" key="10">
    <source>
    </source>
</evidence>
<evidence type="ECO:0000269" key="11">
    <source>
    </source>
</evidence>
<evidence type="ECO:0000269" key="12">
    <source>
    </source>
</evidence>
<evidence type="ECO:0000305" key="13"/>
<dbReference type="EMBL" id="M12240">
    <property type="protein sequence ID" value="AAA45794.1"/>
    <property type="status" value="ALT_SEQ"/>
    <property type="molecule type" value="Genomic_DNA"/>
</dbReference>
<dbReference type="EMBL" id="M33699">
    <property type="protein sequence ID" value="AAA45790.1"/>
    <property type="molecule type" value="Genomic_DNA"/>
</dbReference>
<dbReference type="PIR" id="A27768">
    <property type="entry name" value="WMBE38"/>
</dbReference>
<dbReference type="ELM" id="P08353"/>
<dbReference type="IntAct" id="P08353">
    <property type="interactions" value="1"/>
</dbReference>
<dbReference type="GO" id="GO:0030430">
    <property type="term" value="C:host cell cytoplasm"/>
    <property type="evidence" value="ECO:0007669"/>
    <property type="project" value="UniProtKB-SubCell"/>
</dbReference>
<dbReference type="GO" id="GO:0044196">
    <property type="term" value="C:host cell nucleolus"/>
    <property type="evidence" value="ECO:0007669"/>
    <property type="project" value="UniProtKB-SubCell"/>
</dbReference>
<dbReference type="GO" id="GO:0044423">
    <property type="term" value="C:virion component"/>
    <property type="evidence" value="ECO:0007669"/>
    <property type="project" value="UniProtKB-KW"/>
</dbReference>
<dbReference type="GO" id="GO:0004865">
    <property type="term" value="F:protein serine/threonine phosphatase inhibitor activity"/>
    <property type="evidence" value="ECO:0007669"/>
    <property type="project" value="UniProtKB-KW"/>
</dbReference>
<dbReference type="GO" id="GO:0034976">
    <property type="term" value="P:response to endoplasmic reticulum stress"/>
    <property type="evidence" value="ECO:0007669"/>
    <property type="project" value="TreeGrafter"/>
</dbReference>
<dbReference type="GO" id="GO:0140321">
    <property type="term" value="P:symbiont-mediated suppression of host autophagy"/>
    <property type="evidence" value="ECO:0007669"/>
    <property type="project" value="UniProtKB-KW"/>
</dbReference>
<dbReference type="GO" id="GO:0052170">
    <property type="term" value="P:symbiont-mediated suppression of host innate immune response"/>
    <property type="evidence" value="ECO:0007669"/>
    <property type="project" value="UniProtKB-KW"/>
</dbReference>
<dbReference type="GO" id="GO:0039606">
    <property type="term" value="P:symbiont-mediated suppression of host translation initiation"/>
    <property type="evidence" value="ECO:0007669"/>
    <property type="project" value="UniProtKB-KW"/>
</dbReference>
<dbReference type="GO" id="GO:0039502">
    <property type="term" value="P:symbiont-mediated suppression of host type I interferon-mediated signaling pathway"/>
    <property type="evidence" value="ECO:0007669"/>
    <property type="project" value="UniProtKB-KW"/>
</dbReference>
<dbReference type="InterPro" id="IPR051254">
    <property type="entry name" value="PPP1R15"/>
</dbReference>
<dbReference type="PANTHER" id="PTHR16489">
    <property type="entry name" value="GH11727P"/>
    <property type="match status" value="1"/>
</dbReference>
<dbReference type="PANTHER" id="PTHR16489:SF14">
    <property type="entry name" value="PROTEIN PHOSPHATASE 1 REGULATORY SUBUNIT 15A"/>
    <property type="match status" value="1"/>
</dbReference>
<gene>
    <name type="primary">RL1</name>
    <name type="synonym">ICP34.5</name>
</gene>
<name>ICP34_HHV1F</name>
<sequence length="263" mass="27533">MARRRRHRGPRRPRPPGPTGAVPTAQSQVTSTPNSEPAVRSAPAAAPPPPPASGPPPSCSLLLRQWLHVPESASDDDDDDDWPDSPPPEPAPEARPTAAAPRPRSPPPGAGPGGGANPSHPPSRPFRLPPRLALRLRVTAEHLARLRLRRAGGEGAPEPPATPATPATPATPATPATPATPATPATPATPARVRFSPHVRVRHLVVWASAARLARRGSWARERADRARFRRRVAEAEAVIGPCLGPEARARALARGAGPANSV</sequence>
<reference key="1">
    <citation type="journal article" date="1986" name="J. Virol.">
        <title>The terminal a sequence of the herpes simplex virus genome contains the promoter of a gene located in the repeat sequences of the L component.</title>
        <authorList>
            <person name="Chou J."/>
            <person name="Roizman B."/>
        </authorList>
    </citation>
    <scope>NUCLEOTIDE SEQUENCE [GENOMIC DNA]</scope>
</reference>
<reference key="2">
    <citation type="journal article" date="1990" name="J. Virol.">
        <title>The herpes simplex virus 1 gene for ICP34.5, which maps in inverted repeats, is conserved in several limited-passage isolates but not in strain 17syn+.</title>
        <authorList>
            <person name="Chou J."/>
            <person name="Roizman B."/>
        </authorList>
    </citation>
    <scope>SEQUENCE REVISION</scope>
</reference>
<reference key="3">
    <citation type="journal article" date="1997" name="Proc. Natl. Acad. Sci. U.S.A.">
        <title>The gamma(1)34.5 protein of herpes simplex virus 1 complexes with protein phosphatase 1alpha to dephosphorylate the alpha subunit of the eukaryotic translation initiation factor 2 and preclude the shutoff of protein synthesis by double-stranded RNA-activated protein kinase.</title>
        <authorList>
            <person name="He B."/>
            <person name="Gross M."/>
            <person name="Roizman B."/>
        </authorList>
    </citation>
    <scope>FUNCTION</scope>
    <scope>INTERACTION WITH HUMAN PPP1CA</scope>
</reference>
<reference key="4">
    <citation type="journal article" date="1998" name="J. Biol. Chem.">
        <title>The gamma134.5 protein of herpes simplex virus 1 has the structural and functional attributes of a protein phosphatase 1 regulatory subunit and is present in a high molecular weight complex with the enzyme in infected cells.</title>
        <authorList>
            <person name="He B."/>
            <person name="Gross M."/>
            <person name="Roizman B."/>
        </authorList>
    </citation>
    <scope>INTERACTION WITH HUMAN PPP1CA</scope>
</reference>
<reference key="5">
    <citation type="journal article" date="2001" name="Virology">
        <title>Val193 and Phe195 of the gamma 1 34.5 protein of herpes simplex virus 1 are required for viral resistance to interferon-alpha/beta.</title>
        <authorList>
            <person name="Cheng G."/>
            <person name="Brett M.-E."/>
            <person name="He B."/>
        </authorList>
    </citation>
    <scope>MUTAGENESIS OF VAL-193 AND PHE-195</scope>
</reference>
<reference key="6">
    <citation type="journal article" date="2002" name="J. Virol.">
        <title>Cell surface major histocompatibility complex class II proteins are regulated by the products of the gamma(1)34.5 and U(L)41 genes of herpes simplex virus 1.</title>
        <authorList>
            <person name="Trgovcich J."/>
            <person name="Johnson D."/>
            <person name="Roizman B."/>
        </authorList>
    </citation>
    <scope>FUNCTION</scope>
</reference>
<reference key="7">
    <citation type="journal article" date="2002" name="J. Virol.">
        <title>Signals that dictate nuclear, nucleolar, and cytoplasmic shuttling of the gamma(1)34.5 protein of herpes simplex virus type 1.</title>
        <authorList>
            <person name="Cheng G."/>
            <person name="Brett M.-E."/>
            <person name="He B."/>
        </authorList>
    </citation>
    <scope>SUBCELLULAR LOCATION</scope>
    <scope>NUCLEAR LOCALIZATION SIGNAL</scope>
    <scope>NUCLEAR EXPORT SIGNAL</scope>
    <scope>MUTAGENESIS OF LEU-134; LEU-136; ARG-215 AND ARG-216</scope>
</reference>
<reference key="8">
    <citation type="journal article" date="2003" name="J. Neurovirol.">
        <title>The herpes simplex virus (HSV) protein ICP34.5 is a virion component that forms a DNA-binding complex with proliferating cell nuclear antigen and HSV replication proteins.</title>
        <authorList>
            <person name="Harland J."/>
            <person name="Dunn P."/>
            <person name="Cameron E."/>
            <person name="Conner J."/>
            <person name="Brown S.M."/>
        </authorList>
    </citation>
    <scope>SUBCELLULAR LOCATION</scope>
    <scope>INTERACTION WITH HOST PCNA</scope>
</reference>
<reference key="9">
    <citation type="journal article" date="2005" name="J. Gen. Virol.">
        <title>Characterization of the triplet repeats in the central domain of the gamma134.5 protein of herpes simplex virus 1.</title>
        <authorList>
            <person name="Jing X."/>
            <person name="He B."/>
        </authorList>
    </citation>
    <scope>REGION OF TRIPLET REPEATS</scope>
</reference>
<reference key="10">
    <citation type="journal article" date="2005" name="Science">
        <title>A selective inhibitor of eIF2alpha dephosphorylation protects cells from ER stress.</title>
        <authorList>
            <person name="Boyce M."/>
            <person name="Bryant K.F."/>
            <person name="Jousse C."/>
            <person name="Long K."/>
            <person name="Harding H.P."/>
            <person name="Scheuner D."/>
            <person name="Kaufman R.J."/>
            <person name="Ma D."/>
            <person name="Coen D.M."/>
            <person name="Ron D."/>
            <person name="Yuan J."/>
        </authorList>
    </citation>
    <scope>FUNCTION</scope>
</reference>
<reference key="11">
    <citation type="journal article" date="2011" name="J. Biol. Chem.">
        <title>ICP34.5 protein of herpes simplex virus facilitates the initiation of protein translation by bridging eukaryotic initiation factor 2alpha (eIF2alpha) and protein phosphatase 1.</title>
        <authorList>
            <person name="Li Y."/>
            <person name="Zhang C."/>
            <person name="Chen X."/>
            <person name="Yu J."/>
            <person name="Wang Y."/>
            <person name="Yang Y."/>
            <person name="Du M."/>
            <person name="Jin H."/>
            <person name="Ma Y."/>
            <person name="He B."/>
            <person name="Cao Y."/>
        </authorList>
    </citation>
    <scope>INTERACTION WITH HOST EIF2S1/EIF-2ALPHA</scope>
    <scope>FUNCTION</scope>
</reference>
<feature type="chain" id="PRO_0000115807" description="Neurovirulence factor ICP34.5">
    <location>
        <begin position="1"/>
        <end position="263"/>
    </location>
</feature>
<feature type="repeat" description="1" evidence="9">
    <location>
        <begin position="161"/>
        <end position="163"/>
    </location>
</feature>
<feature type="repeat" description="2" evidence="9">
    <location>
        <begin position="164"/>
        <end position="166"/>
    </location>
</feature>
<feature type="repeat" description="3" evidence="9">
    <location>
        <begin position="167"/>
        <end position="169"/>
    </location>
</feature>
<feature type="repeat" description="4" evidence="9">
    <location>
        <begin position="170"/>
        <end position="172"/>
    </location>
</feature>
<feature type="repeat" description="5" evidence="9">
    <location>
        <begin position="173"/>
        <end position="175"/>
    </location>
</feature>
<feature type="repeat" description="6" evidence="9">
    <location>
        <begin position="176"/>
        <end position="178"/>
    </location>
</feature>
<feature type="repeat" description="7" evidence="9">
    <location>
        <begin position="179"/>
        <end position="181"/>
    </location>
</feature>
<feature type="repeat" description="8" evidence="9">
    <location>
        <begin position="182"/>
        <end position="184"/>
    </location>
</feature>
<feature type="repeat" description="9" evidence="9">
    <location>
        <begin position="185"/>
        <end position="187"/>
    </location>
</feature>
<feature type="repeat" description="10" evidence="9">
    <location>
        <begin position="188"/>
        <end position="190"/>
    </location>
</feature>
<feature type="region of interest" description="Disordered" evidence="3">
    <location>
        <begin position="1"/>
        <end position="128"/>
    </location>
</feature>
<feature type="region of interest" description="Required for nucleolar localization" evidence="6">
    <location>
        <begin position="1"/>
        <end position="16"/>
    </location>
</feature>
<feature type="region of interest" description="Disordered" evidence="3">
    <location>
        <begin position="149"/>
        <end position="190"/>
    </location>
</feature>
<feature type="region of interest" description="10 X 3 AA tandem repeats of A-T-P">
    <location>
        <begin position="161"/>
        <end position="190"/>
    </location>
</feature>
<feature type="region of interest" description="Interaction with host PPP1CA" evidence="12">
    <location>
        <begin position="190"/>
        <end position="203"/>
    </location>
</feature>
<feature type="region of interest" description="Important for interferon resistance">
    <location>
        <begin position="205"/>
        <end position="263"/>
    </location>
</feature>
<feature type="region of interest" description="Interaction with host EIF2S1/EIF-2ALPHA" evidence="10">
    <location>
        <begin position="233"/>
        <end position="248"/>
    </location>
</feature>
<feature type="short sequence motif" description="Nuclear export signal">
    <location>
        <begin position="128"/>
        <end position="137"/>
    </location>
</feature>
<feature type="short sequence motif" description="Bipartite nuclear localization signal">
    <location>
        <begin position="215"/>
        <end position="233"/>
    </location>
</feature>
<feature type="compositionally biased region" description="Basic residues" evidence="3">
    <location>
        <begin position="1"/>
        <end position="14"/>
    </location>
</feature>
<feature type="compositionally biased region" description="Polar residues" evidence="3">
    <location>
        <begin position="24"/>
        <end position="35"/>
    </location>
</feature>
<feature type="compositionally biased region" description="Pro residues" evidence="3">
    <location>
        <begin position="45"/>
        <end position="58"/>
    </location>
</feature>
<feature type="compositionally biased region" description="Acidic residues" evidence="3">
    <location>
        <begin position="73"/>
        <end position="83"/>
    </location>
</feature>
<feature type="compositionally biased region" description="Pro residues" evidence="3">
    <location>
        <begin position="84"/>
        <end position="93"/>
    </location>
</feature>
<feature type="compositionally biased region" description="Pro residues" evidence="3">
    <location>
        <begin position="119"/>
        <end position="128"/>
    </location>
</feature>
<feature type="compositionally biased region" description="Low complexity" evidence="3">
    <location>
        <begin position="164"/>
        <end position="190"/>
    </location>
</feature>
<feature type="mutagenesis site" description="Complete loss of cytoplasmic localization; when associated with A-136." evidence="6">
    <original>L</original>
    <variation>A</variation>
    <location>
        <position position="134"/>
    </location>
</feature>
<feature type="mutagenesis site" description="Complete loss of cytoplasmic localization; when associated with A-134." evidence="6">
    <original>L</original>
    <variation>A</variation>
    <location>
        <position position="136"/>
    </location>
</feature>
<feature type="mutagenesis site" description="Loss of interferon resistance; when associated with F-195." evidence="4">
    <original>V</original>
    <variation>E</variation>
    <location>
        <position position="193"/>
    </location>
</feature>
<feature type="mutagenesis site" description="Loss of interferon resistance; when associated with V-193." evidence="4">
    <original>F</original>
    <variation>L</variation>
    <location>
        <position position="195"/>
    </location>
</feature>
<feature type="mutagenesis site" description="Decrease in nuclear localization; when associated with A-216." evidence="6">
    <original>R</original>
    <variation>A</variation>
    <location>
        <position position="215"/>
    </location>
</feature>
<feature type="mutagenesis site" description="Decrease in nuclear localization; when associated with A-215." evidence="6">
    <original>R</original>
    <variation>A</variation>
    <location>
        <position position="216"/>
    </location>
</feature>
<accession>P08353</accession>
<protein>
    <recommendedName>
        <fullName>Neurovirulence factor ICP34.5</fullName>
    </recommendedName>
    <alternativeName>
        <fullName>Infected cell protein 34.5</fullName>
    </alternativeName>
    <alternativeName>
        <fullName>protein gamma(1)34.5</fullName>
    </alternativeName>
</protein>
<comment type="function">
    <text evidence="2 5 8 10 11">Inhibits the establishment of the immune response and of the integrated stress response (ISR) in the infected cell (PubMed:15705855, PubMed:21622569). Plays essential roles in viral nuclear egress to mediate capsid transit across the nuclear membrane (By similarity). Facilitates nuclear egress cooperatively with host C1QBP and protein kinase C/PKC to induce lamin A/C phosphorylation and subsequent reorganization (By similarity). In turn, lamina disassembles and nuclear egress occurs (By similarity). Recruits the serine/threonine protein phosphatase PPP1CA/PP1-alpha to dephosphorylate the translation initiation factor EIF2S1/eIF-2alpha, thereby couteracting the host shutoff of protein synthesis involving double-stranded RNA-dependent protein kinase EIF2AK2/PKR (PubMed:21622569, PubMed:9023344). In turn, controls host IRF3 activation and subsequently inhibits host interferon response (By similarity). Controls the DNA sensing pathway by interacting with and inhibiting host STING/TMEM173 (By similarity). Also down-modulates the host MHC class II proteins cell surface expression (PubMed:12072498). Acts as a neurovirulence factor that has a profound effect on the growth of the virus in central nervous system tissue, by interacting with host BECN1 and thereby antagonizing the host autophagy response (By similarity).</text>
</comment>
<comment type="subunit">
    <text evidence="2 7 8 10 11 12">Interacts with host PPP1CA; this interaction to forms a high-molecular-weight complex that dephosphorylates EIF2S1/eIF-2alpha (PubMed:15705855, PubMed:9023344, PubMed:9694816). Interacts with host EIF2S1/eIF-2alpha; this interaction is crucial for the specific dephosphorylation of EIF2S1/eIF-2alpha by PPP1CA (PubMed:21622569). Binds to proliferating cell nuclear antigen (PCNA), which may release host cells from growth arrest and facilitate viral replication (PubMed:12907392). Interacts (via N-terminus) with host C1QBP; this interaction allows C1QBP to be recruited to the inner nuclear membrane by ICP34.5 (By similarity). Interacts with host PRKCA (By similarity). Interacts with protein UL31 (By similarity). Interacts with host STING/TMEM173; this interaction inhibits the intracellular DNA sensing pathway (By similarity). Interacts with host BECN1; this interaction modulates host autophagy (By similarity).</text>
</comment>
<comment type="subcellular location">
    <subcellularLocation>
        <location evidence="6">Host cytoplasm</location>
    </subcellularLocation>
    <subcellularLocation>
        <location evidence="6">Host nucleus</location>
    </subcellularLocation>
    <subcellularLocation>
        <location evidence="6">Host nucleus</location>
        <location evidence="6">Host nucleolus</location>
    </subcellularLocation>
    <subcellularLocation>
        <location>Virion</location>
    </subcellularLocation>
    <text evidence="6">At early times in infection, colocalizes with PCNA and replication proteins in the host cell nucleus, before accumulating in the host cytoplasm by 8 to 12 hours post-infection.</text>
</comment>
<comment type="domain">
    <text>The triplet repeats region may play a role in modulating virus egress.</text>
</comment>
<comment type="miscellaneous">
    <text evidence="1">ICP34.5 is detected as early as 3 hpi prior to viral replication but reaches maximal levels late in infection. ICP34.5 gene is therefore classified as gamma-1 or leaky late gene (By similarity).</text>
</comment>
<comment type="miscellaneous">
    <text>The phosphatase activity of the ICP34.5-PP1 complex toward EIF2S1 is specifically inhibited by Salubrinal, which inhibits viral replication.</text>
</comment>
<comment type="similarity">
    <text evidence="13">Belongs to the PPP1R15 family.</text>
</comment>